<reference key="1">
    <citation type="journal article" date="2010" name="BMC Genomics">
        <title>Genome-wide cloning and sequence analysis of leucine-rich repeat receptor-like protein kinase genes in Arabidopsis thaliana.</title>
        <authorList>
            <person name="Gou X."/>
            <person name="He K."/>
            <person name="Yang H."/>
            <person name="Yuan T."/>
            <person name="Lin H."/>
            <person name="Clouse S.D."/>
            <person name="Li J."/>
        </authorList>
    </citation>
    <scope>NUCLEOTIDE SEQUENCE [LARGE SCALE MRNA]</scope>
    <source>
        <strain>cv. Columbia</strain>
    </source>
</reference>
<reference key="2">
    <citation type="journal article" date="1999" name="Nature">
        <title>Sequence and analysis of chromosome 4 of the plant Arabidopsis thaliana.</title>
        <authorList>
            <person name="Mayer K.F.X."/>
            <person name="Schueller C."/>
            <person name="Wambutt R."/>
            <person name="Murphy G."/>
            <person name="Volckaert G."/>
            <person name="Pohl T."/>
            <person name="Duesterhoeft A."/>
            <person name="Stiekema W."/>
            <person name="Entian K.-D."/>
            <person name="Terryn N."/>
            <person name="Harris B."/>
            <person name="Ansorge W."/>
            <person name="Brandt P."/>
            <person name="Grivell L.A."/>
            <person name="Rieger M."/>
            <person name="Weichselgartner M."/>
            <person name="de Simone V."/>
            <person name="Obermaier B."/>
            <person name="Mache R."/>
            <person name="Mueller M."/>
            <person name="Kreis M."/>
            <person name="Delseny M."/>
            <person name="Puigdomenech P."/>
            <person name="Watson M."/>
            <person name="Schmidtheini T."/>
            <person name="Reichert B."/>
            <person name="Portetelle D."/>
            <person name="Perez-Alonso M."/>
            <person name="Boutry M."/>
            <person name="Bancroft I."/>
            <person name="Vos P."/>
            <person name="Hoheisel J."/>
            <person name="Zimmermann W."/>
            <person name="Wedler H."/>
            <person name="Ridley P."/>
            <person name="Langham S.-A."/>
            <person name="McCullagh B."/>
            <person name="Bilham L."/>
            <person name="Robben J."/>
            <person name="van der Schueren J."/>
            <person name="Grymonprez B."/>
            <person name="Chuang Y.-J."/>
            <person name="Vandenbussche F."/>
            <person name="Braeken M."/>
            <person name="Weltjens I."/>
            <person name="Voet M."/>
            <person name="Bastiaens I."/>
            <person name="Aert R."/>
            <person name="Defoor E."/>
            <person name="Weitzenegger T."/>
            <person name="Bothe G."/>
            <person name="Ramsperger U."/>
            <person name="Hilbert H."/>
            <person name="Braun M."/>
            <person name="Holzer E."/>
            <person name="Brandt A."/>
            <person name="Peters S."/>
            <person name="van Staveren M."/>
            <person name="Dirkse W."/>
            <person name="Mooijman P."/>
            <person name="Klein Lankhorst R."/>
            <person name="Rose M."/>
            <person name="Hauf J."/>
            <person name="Koetter P."/>
            <person name="Berneiser S."/>
            <person name="Hempel S."/>
            <person name="Feldpausch M."/>
            <person name="Lamberth S."/>
            <person name="Van den Daele H."/>
            <person name="De Keyser A."/>
            <person name="Buysshaert C."/>
            <person name="Gielen J."/>
            <person name="Villarroel R."/>
            <person name="De Clercq R."/>
            <person name="van Montagu M."/>
            <person name="Rogers J."/>
            <person name="Cronin A."/>
            <person name="Quail M.A."/>
            <person name="Bray-Allen S."/>
            <person name="Clark L."/>
            <person name="Doggett J."/>
            <person name="Hall S."/>
            <person name="Kay M."/>
            <person name="Lennard N."/>
            <person name="McLay K."/>
            <person name="Mayes R."/>
            <person name="Pettett A."/>
            <person name="Rajandream M.A."/>
            <person name="Lyne M."/>
            <person name="Benes V."/>
            <person name="Rechmann S."/>
            <person name="Borkova D."/>
            <person name="Bloecker H."/>
            <person name="Scharfe M."/>
            <person name="Grimm M."/>
            <person name="Loehnert T.-H."/>
            <person name="Dose S."/>
            <person name="de Haan M."/>
            <person name="Maarse A.C."/>
            <person name="Schaefer M."/>
            <person name="Mueller-Auer S."/>
            <person name="Gabel C."/>
            <person name="Fuchs M."/>
            <person name="Fartmann B."/>
            <person name="Granderath K."/>
            <person name="Dauner D."/>
            <person name="Herzl A."/>
            <person name="Neumann S."/>
            <person name="Argiriou A."/>
            <person name="Vitale D."/>
            <person name="Liguori R."/>
            <person name="Piravandi E."/>
            <person name="Massenet O."/>
            <person name="Quigley F."/>
            <person name="Clabauld G."/>
            <person name="Muendlein A."/>
            <person name="Felber R."/>
            <person name="Schnabl S."/>
            <person name="Hiller R."/>
            <person name="Schmidt W."/>
            <person name="Lecharny A."/>
            <person name="Aubourg S."/>
            <person name="Chefdor F."/>
            <person name="Cooke R."/>
            <person name="Berger C."/>
            <person name="Monfort A."/>
            <person name="Casacuberta E."/>
            <person name="Gibbons T."/>
            <person name="Weber N."/>
            <person name="Vandenbol M."/>
            <person name="Bargues M."/>
            <person name="Terol J."/>
            <person name="Torres A."/>
            <person name="Perez-Perez A."/>
            <person name="Purnelle B."/>
            <person name="Bent E."/>
            <person name="Johnson S."/>
            <person name="Tacon D."/>
            <person name="Jesse T."/>
            <person name="Heijnen L."/>
            <person name="Schwarz S."/>
            <person name="Scholler P."/>
            <person name="Heber S."/>
            <person name="Francs P."/>
            <person name="Bielke C."/>
            <person name="Frishman D."/>
            <person name="Haase D."/>
            <person name="Lemcke K."/>
            <person name="Mewes H.-W."/>
            <person name="Stocker S."/>
            <person name="Zaccaria P."/>
            <person name="Bevan M."/>
            <person name="Wilson R.K."/>
            <person name="de la Bastide M."/>
            <person name="Habermann K."/>
            <person name="Parnell L."/>
            <person name="Dedhia N."/>
            <person name="Gnoj L."/>
            <person name="Schutz K."/>
            <person name="Huang E."/>
            <person name="Spiegel L."/>
            <person name="Sekhon M."/>
            <person name="Murray J."/>
            <person name="Sheet P."/>
            <person name="Cordes M."/>
            <person name="Abu-Threideh J."/>
            <person name="Stoneking T."/>
            <person name="Kalicki J."/>
            <person name="Graves T."/>
            <person name="Harmon G."/>
            <person name="Edwards J."/>
            <person name="Latreille P."/>
            <person name="Courtney L."/>
            <person name="Cloud J."/>
            <person name="Abbott A."/>
            <person name="Scott K."/>
            <person name="Johnson D."/>
            <person name="Minx P."/>
            <person name="Bentley D."/>
            <person name="Fulton B."/>
            <person name="Miller N."/>
            <person name="Greco T."/>
            <person name="Kemp K."/>
            <person name="Kramer J."/>
            <person name="Fulton L."/>
            <person name="Mardis E."/>
            <person name="Dante M."/>
            <person name="Pepin K."/>
            <person name="Hillier L.W."/>
            <person name="Nelson J."/>
            <person name="Spieth J."/>
            <person name="Ryan E."/>
            <person name="Andrews S."/>
            <person name="Geisel C."/>
            <person name="Layman D."/>
            <person name="Du H."/>
            <person name="Ali J."/>
            <person name="Berghoff A."/>
            <person name="Jones K."/>
            <person name="Drone K."/>
            <person name="Cotton M."/>
            <person name="Joshu C."/>
            <person name="Antonoiu B."/>
            <person name="Zidanic M."/>
            <person name="Strong C."/>
            <person name="Sun H."/>
            <person name="Lamar B."/>
            <person name="Yordan C."/>
            <person name="Ma P."/>
            <person name="Zhong J."/>
            <person name="Preston R."/>
            <person name="Vil D."/>
            <person name="Shekher M."/>
            <person name="Matero A."/>
            <person name="Shah R."/>
            <person name="Swaby I.K."/>
            <person name="O'Shaughnessy A."/>
            <person name="Rodriguez M."/>
            <person name="Hoffman J."/>
            <person name="Till S."/>
            <person name="Granat S."/>
            <person name="Shohdy N."/>
            <person name="Hasegawa A."/>
            <person name="Hameed A."/>
            <person name="Lodhi M."/>
            <person name="Johnson A."/>
            <person name="Chen E."/>
            <person name="Marra M.A."/>
            <person name="Martienssen R."/>
            <person name="McCombie W.R."/>
        </authorList>
    </citation>
    <scope>NUCLEOTIDE SEQUENCE [LARGE SCALE GENOMIC DNA]</scope>
    <source>
        <strain>cv. Columbia</strain>
    </source>
</reference>
<reference key="3">
    <citation type="journal article" date="2017" name="Plant J.">
        <title>Araport11: a complete reannotation of the Arabidopsis thaliana reference genome.</title>
        <authorList>
            <person name="Cheng C.Y."/>
            <person name="Krishnakumar V."/>
            <person name="Chan A.P."/>
            <person name="Thibaud-Nissen F."/>
            <person name="Schobel S."/>
            <person name="Town C.D."/>
        </authorList>
    </citation>
    <scope>GENOME REANNOTATION</scope>
    <source>
        <strain>cv. Columbia</strain>
    </source>
</reference>
<reference key="4">
    <citation type="journal article" date="2007" name="Curr. Biol.">
        <title>PXY, a receptor-like kinase essential for maintaining polarity during plant vascular-tissue development.</title>
        <authorList>
            <person name="Fisher K."/>
            <person name="Turner S."/>
        </authorList>
    </citation>
    <scope>FUNCTION</scope>
    <scope>DISRUPTION PHENOTYPE</scope>
</reference>
<reference key="5">
    <citation type="journal article" date="2010" name="Protoplasma">
        <title>CLE peptide signaling during plant development.</title>
        <authorList>
            <person name="Wang G."/>
            <person name="Fiers M."/>
        </authorList>
    </citation>
    <scope>REVIEW</scope>
</reference>
<reference key="6">
    <citation type="journal article" date="2016" name="Nature">
        <title>A receptor heteromer mediates the male perception of female attractants in plants.</title>
        <authorList>
            <person name="Wang T."/>
            <person name="Liang L."/>
            <person name="Xue Y."/>
            <person name="Jia P.F."/>
            <person name="Chen W."/>
            <person name="Zhang M.X."/>
            <person name="Wang Y.C."/>
            <person name="Li H.J."/>
            <person name="Yang W.C."/>
        </authorList>
    </citation>
    <scope>FUNCTION</scope>
    <scope>INTERACTION WITH MDIS1 AND LURE1.2</scope>
    <scope>TISSUE SPECIFICITY</scope>
    <scope>PHOSPHORYLATION AT THR-710; THR-741; THR-742; THR-862; SER-864; TYR-879; THR-880 AND THR-992</scope>
    <scope>SUBUNIT</scope>
</reference>
<feature type="signal peptide" evidence="4">
    <location>
        <begin position="1"/>
        <end position="23"/>
    </location>
</feature>
<feature type="chain" id="PRO_0000401293" description="MDIS1-interacting receptor like kinase 1">
    <location>
        <begin position="24"/>
        <end position="1013"/>
    </location>
</feature>
<feature type="topological domain" description="Extracellular" evidence="4">
    <location>
        <begin position="24"/>
        <end position="633"/>
    </location>
</feature>
<feature type="transmembrane region" description="Helical" evidence="4">
    <location>
        <begin position="634"/>
        <end position="654"/>
    </location>
</feature>
<feature type="topological domain" description="Cytoplasmic" evidence="4">
    <location>
        <begin position="655"/>
        <end position="1013"/>
    </location>
</feature>
<feature type="repeat" description="LRR 1" evidence="4">
    <location>
        <begin position="70"/>
        <end position="94"/>
    </location>
</feature>
<feature type="repeat" description="LRR 2" evidence="4">
    <location>
        <begin position="95"/>
        <end position="117"/>
    </location>
</feature>
<feature type="repeat" description="LRR 3" evidence="4">
    <location>
        <begin position="119"/>
        <end position="137"/>
    </location>
</feature>
<feature type="repeat" description="LRR 4" evidence="4">
    <location>
        <begin position="139"/>
        <end position="163"/>
    </location>
</feature>
<feature type="repeat" description="LRR 5" evidence="4">
    <location>
        <begin position="164"/>
        <end position="186"/>
    </location>
</feature>
<feature type="repeat" description="LRR 6" evidence="4">
    <location>
        <begin position="187"/>
        <end position="213"/>
    </location>
</feature>
<feature type="repeat" description="LRR 7" evidence="4">
    <location>
        <begin position="215"/>
        <end position="234"/>
    </location>
</feature>
<feature type="repeat" description="LRR 8" evidence="4">
    <location>
        <begin position="235"/>
        <end position="259"/>
    </location>
</feature>
<feature type="repeat" description="LRR 9" evidence="4">
    <location>
        <begin position="260"/>
        <end position="283"/>
    </location>
</feature>
<feature type="repeat" description="LRR 10" evidence="4">
    <location>
        <begin position="284"/>
        <end position="307"/>
    </location>
</feature>
<feature type="repeat" description="LRR 11" evidence="4">
    <location>
        <begin position="308"/>
        <end position="331"/>
    </location>
</feature>
<feature type="repeat" description="LRR 12" evidence="4">
    <location>
        <begin position="333"/>
        <end position="355"/>
    </location>
</feature>
<feature type="repeat" description="LRR 13" evidence="4">
    <location>
        <begin position="357"/>
        <end position="379"/>
    </location>
</feature>
<feature type="repeat" description="LRR 14" evidence="4">
    <location>
        <begin position="381"/>
        <end position="403"/>
    </location>
</feature>
<feature type="repeat" description="LRR 15" evidence="4">
    <location>
        <begin position="405"/>
        <end position="426"/>
    </location>
</feature>
<feature type="repeat" description="LRR 16" evidence="4">
    <location>
        <begin position="427"/>
        <end position="451"/>
    </location>
</feature>
<feature type="repeat" description="LRR 17" evidence="4">
    <location>
        <begin position="453"/>
        <end position="475"/>
    </location>
</feature>
<feature type="repeat" description="LRR 18" evidence="4">
    <location>
        <begin position="477"/>
        <end position="498"/>
    </location>
</feature>
<feature type="repeat" description="LRR 19" evidence="4">
    <location>
        <begin position="499"/>
        <end position="523"/>
    </location>
</feature>
<feature type="repeat" description="LRR 20" evidence="4">
    <location>
        <begin position="525"/>
        <end position="547"/>
    </location>
</feature>
<feature type="repeat" description="LRR 21" evidence="4">
    <location>
        <begin position="548"/>
        <end position="571"/>
    </location>
</feature>
<feature type="repeat" description="LRR 22" evidence="4">
    <location>
        <begin position="573"/>
        <end position="595"/>
    </location>
</feature>
<feature type="domain" description="Protein kinase" evidence="5">
    <location>
        <begin position="699"/>
        <end position="983"/>
    </location>
</feature>
<feature type="region of interest" description="Disordered" evidence="7">
    <location>
        <begin position="976"/>
        <end position="1013"/>
    </location>
</feature>
<feature type="compositionally biased region" description="Polar residues" evidence="7">
    <location>
        <begin position="1002"/>
        <end position="1013"/>
    </location>
</feature>
<feature type="active site" description="Proton acceptor" evidence="5 6">
    <location>
        <position position="831"/>
    </location>
</feature>
<feature type="binding site" evidence="5">
    <location>
        <begin position="705"/>
        <end position="713"/>
    </location>
    <ligand>
        <name>ATP</name>
        <dbReference type="ChEBI" id="CHEBI:30616"/>
    </ligand>
</feature>
<feature type="binding site" evidence="5">
    <location>
        <position position="728"/>
    </location>
    <ligand>
        <name>ATP</name>
        <dbReference type="ChEBI" id="CHEBI:30616"/>
    </ligand>
</feature>
<feature type="modified residue" description="Phosphothreonine" evidence="3">
    <location>
        <position position="691"/>
    </location>
</feature>
<feature type="modified residue" description="Phosphothreonine; by autocatalysis" evidence="9">
    <location>
        <position position="710"/>
    </location>
</feature>
<feature type="modified residue" description="Phosphothreonine; by autocatalysis" evidence="9">
    <location>
        <position position="741"/>
    </location>
</feature>
<feature type="modified residue" description="Phosphothreonine; by autocatalysis" evidence="9">
    <location>
        <position position="742"/>
    </location>
</feature>
<feature type="modified residue" description="Phosphotyrosine" evidence="3">
    <location>
        <position position="777"/>
    </location>
</feature>
<feature type="modified residue" description="Phosphotyrosine" evidence="2">
    <location>
        <position position="818"/>
    </location>
</feature>
<feature type="modified residue" description="Phosphothreonine; by autocatalysis" evidence="9">
    <location>
        <position position="862"/>
    </location>
</feature>
<feature type="modified residue" description="Phosphoserine; by autocatalysis" evidence="9">
    <location>
        <position position="864"/>
    </location>
</feature>
<feature type="modified residue" description="Phosphotyrosine" evidence="2">
    <location>
        <position position="872"/>
    </location>
</feature>
<feature type="modified residue" description="Phosphotyrosine; by autocatalysis" evidence="9">
    <location>
        <position position="879"/>
    </location>
</feature>
<feature type="modified residue" description="Phosphothreonine; by autocatalysis" evidence="9">
    <location>
        <position position="880"/>
    </location>
</feature>
<feature type="modified residue" description="Phosphothreonine; by autocatalysis" evidence="9">
    <location>
        <position position="992"/>
    </location>
</feature>
<feature type="glycosylation site" description="N-linked (GlcNAc...) asparagine" evidence="4">
    <location>
        <position position="61"/>
    </location>
</feature>
<feature type="glycosylation site" description="N-linked (GlcNAc...) asparagine" evidence="4">
    <location>
        <position position="82"/>
    </location>
</feature>
<feature type="glycosylation site" description="N-linked (GlcNAc...) asparagine" evidence="4">
    <location>
        <position position="101"/>
    </location>
</feature>
<feature type="glycosylation site" description="N-linked (GlcNAc...) asparagine" evidence="4">
    <location>
        <position position="137"/>
    </location>
</feature>
<feature type="glycosylation site" description="N-linked (GlcNAc...) asparagine" evidence="4">
    <location>
        <position position="146"/>
    </location>
</feature>
<feature type="glycosylation site" description="N-linked (GlcNAc...) asparagine" evidence="4">
    <location>
        <position position="151"/>
    </location>
</feature>
<feature type="glycosylation site" description="N-linked (GlcNAc...) asparagine" evidence="4">
    <location>
        <position position="155"/>
    </location>
</feature>
<feature type="glycosylation site" description="N-linked (GlcNAc...) asparagine" evidence="4">
    <location>
        <position position="199"/>
    </location>
</feature>
<feature type="glycosylation site" description="N-linked (GlcNAc...) asparagine" evidence="4">
    <location>
        <position position="271"/>
    </location>
</feature>
<feature type="glycosylation site" description="N-linked (GlcNAc...) asparagine" evidence="4">
    <location>
        <position position="341"/>
    </location>
</feature>
<feature type="glycosylation site" description="N-linked (GlcNAc...) asparagine" evidence="4">
    <location>
        <position position="381"/>
    </location>
</feature>
<feature type="glycosylation site" description="N-linked (GlcNAc...) asparagine" evidence="4">
    <location>
        <position position="389"/>
    </location>
</feature>
<feature type="glycosylation site" description="N-linked (GlcNAc...) asparagine" evidence="4">
    <location>
        <position position="417"/>
    </location>
</feature>
<feature type="glycosylation site" description="N-linked (GlcNAc...) asparagine" evidence="4">
    <location>
        <position position="535"/>
    </location>
</feature>
<feature type="glycosylation site" description="N-linked (GlcNAc...) asparagine" evidence="4">
    <location>
        <position position="557"/>
    </location>
</feature>
<feature type="glycosylation site" description="N-linked (GlcNAc...) asparagine" evidence="4">
    <location>
        <position position="578"/>
    </location>
</feature>
<protein>
    <recommendedName>
        <fullName evidence="11">MDIS1-interacting receptor like kinase 1</fullName>
        <shortName evidence="11">AtMIK1</shortName>
    </recommendedName>
    <alternativeName>
        <fullName evidence="10">Leucine-rich repeat receptor-like protein kinase PXL2</fullName>
        <ecNumber evidence="12">2.7.11.1</ecNumber>
    </alternativeName>
    <alternativeName>
        <fullName evidence="10">Protein PHLOEM INTERCALATED WITH XYLEM-LIKE 2</fullName>
    </alternativeName>
</protein>
<proteinExistence type="evidence at protein level"/>
<dbReference type="EC" id="2.7.11.1" evidence="12"/>
<dbReference type="EMBL" id="FJ708756">
    <property type="protein sequence ID" value="ACN59350.1"/>
    <property type="molecule type" value="mRNA"/>
</dbReference>
<dbReference type="EMBL" id="AL161573">
    <property type="protein sequence ID" value="CAB81453.1"/>
    <property type="molecule type" value="Genomic_DNA"/>
</dbReference>
<dbReference type="EMBL" id="CP002687">
    <property type="protein sequence ID" value="AEE85518.1"/>
    <property type="molecule type" value="Genomic_DNA"/>
</dbReference>
<dbReference type="PIR" id="T10659">
    <property type="entry name" value="T10659"/>
</dbReference>
<dbReference type="RefSeq" id="NP_194594.1">
    <property type="nucleotide sequence ID" value="NM_119007.3"/>
</dbReference>
<dbReference type="SMR" id="Q9M0G7"/>
<dbReference type="BioGRID" id="14270">
    <property type="interactions" value="32"/>
</dbReference>
<dbReference type="DIP" id="DIP-61969N"/>
<dbReference type="FunCoup" id="Q9M0G7">
    <property type="interactions" value="600"/>
</dbReference>
<dbReference type="IntAct" id="Q9M0G7">
    <property type="interactions" value="31"/>
</dbReference>
<dbReference type="STRING" id="3702.Q9M0G7"/>
<dbReference type="GlyCosmos" id="Q9M0G7">
    <property type="glycosylation" value="16 sites, No reported glycans"/>
</dbReference>
<dbReference type="GlyGen" id="Q9M0G7">
    <property type="glycosylation" value="16 sites"/>
</dbReference>
<dbReference type="iPTMnet" id="Q9M0G7"/>
<dbReference type="PaxDb" id="3702-AT4G28650.1"/>
<dbReference type="ProteomicsDB" id="238290"/>
<dbReference type="EnsemblPlants" id="AT4G28650.1">
    <property type="protein sequence ID" value="AT4G28650.1"/>
    <property type="gene ID" value="AT4G28650"/>
</dbReference>
<dbReference type="GeneID" id="828983"/>
<dbReference type="Gramene" id="AT4G28650.1">
    <property type="protein sequence ID" value="AT4G28650.1"/>
    <property type="gene ID" value="AT4G28650"/>
</dbReference>
<dbReference type="KEGG" id="ath:AT4G28650"/>
<dbReference type="Araport" id="AT4G28650"/>
<dbReference type="TAIR" id="AT4G28650">
    <property type="gene designation" value="PXL2"/>
</dbReference>
<dbReference type="eggNOG" id="ENOG502QPWI">
    <property type="taxonomic scope" value="Eukaryota"/>
</dbReference>
<dbReference type="HOGENOM" id="CLU_000288_22_1_1"/>
<dbReference type="InParanoid" id="Q9M0G7"/>
<dbReference type="OMA" id="WYSNGFC"/>
<dbReference type="PhylomeDB" id="Q9M0G7"/>
<dbReference type="PRO" id="PR:Q9M0G7"/>
<dbReference type="Proteomes" id="UP000006548">
    <property type="component" value="Chromosome 4"/>
</dbReference>
<dbReference type="ExpressionAtlas" id="Q9M0G7">
    <property type="expression patterns" value="baseline and differential"/>
</dbReference>
<dbReference type="GO" id="GO:0005886">
    <property type="term" value="C:plasma membrane"/>
    <property type="evidence" value="ECO:0007669"/>
    <property type="project" value="UniProtKB-SubCell"/>
</dbReference>
<dbReference type="GO" id="GO:0090406">
    <property type="term" value="C:pollen tube"/>
    <property type="evidence" value="ECO:0000314"/>
    <property type="project" value="TAIR"/>
</dbReference>
<dbReference type="GO" id="GO:0005524">
    <property type="term" value="F:ATP binding"/>
    <property type="evidence" value="ECO:0007669"/>
    <property type="project" value="UniProtKB-KW"/>
</dbReference>
<dbReference type="GO" id="GO:0004672">
    <property type="term" value="F:protein kinase activity"/>
    <property type="evidence" value="ECO:0000314"/>
    <property type="project" value="TAIR"/>
</dbReference>
<dbReference type="GO" id="GO:0106310">
    <property type="term" value="F:protein serine kinase activity"/>
    <property type="evidence" value="ECO:0007669"/>
    <property type="project" value="RHEA"/>
</dbReference>
<dbReference type="GO" id="GO:0004674">
    <property type="term" value="F:protein serine/threonine kinase activity"/>
    <property type="evidence" value="ECO:0007669"/>
    <property type="project" value="UniProtKB-KW"/>
</dbReference>
<dbReference type="GO" id="GO:0030154">
    <property type="term" value="P:cell differentiation"/>
    <property type="evidence" value="ECO:0007669"/>
    <property type="project" value="UniProtKB-KW"/>
</dbReference>
<dbReference type="GO" id="GO:0010087">
    <property type="term" value="P:phloem or xylem histogenesis"/>
    <property type="evidence" value="ECO:0000315"/>
    <property type="project" value="TAIR"/>
</dbReference>
<dbReference type="GO" id="GO:0010183">
    <property type="term" value="P:pollen tube guidance"/>
    <property type="evidence" value="ECO:0000316"/>
    <property type="project" value="TAIR"/>
</dbReference>
<dbReference type="GO" id="GO:0010067">
    <property type="term" value="P:procambium histogenesis"/>
    <property type="evidence" value="ECO:0000250"/>
    <property type="project" value="UniProtKB"/>
</dbReference>
<dbReference type="GO" id="GO:0046777">
    <property type="term" value="P:protein autophosphorylation"/>
    <property type="evidence" value="ECO:0000314"/>
    <property type="project" value="TAIR"/>
</dbReference>
<dbReference type="GO" id="GO:0006468">
    <property type="term" value="P:protein phosphorylation"/>
    <property type="evidence" value="ECO:0000314"/>
    <property type="project" value="TAIR"/>
</dbReference>
<dbReference type="FunFam" id="3.80.10.10:FF:000297">
    <property type="entry name" value="Leucine-rich repeat receptor-like protein kinase PXL1"/>
    <property type="match status" value="1"/>
</dbReference>
<dbReference type="FunFam" id="1.10.510.10:FF:000400">
    <property type="entry name" value="MDIS1-interacting receptor like kinase 1"/>
    <property type="match status" value="1"/>
</dbReference>
<dbReference type="FunFam" id="3.30.200.20:FF:000444">
    <property type="entry name" value="MDIS1-interacting receptor like kinase 1"/>
    <property type="match status" value="1"/>
</dbReference>
<dbReference type="FunFam" id="3.80.10.10:FF:000825">
    <property type="entry name" value="MDIS1-interacting receptor like kinase 1"/>
    <property type="match status" value="1"/>
</dbReference>
<dbReference type="FunFam" id="3.80.10.10:FF:001590">
    <property type="entry name" value="MDIS1-interacting receptor like kinase 1"/>
    <property type="match status" value="1"/>
</dbReference>
<dbReference type="FunFam" id="3.80.10.10:FF:000416">
    <property type="entry name" value="Probable leucine-rich repeat receptor-like protein kinase At5g63930"/>
    <property type="match status" value="1"/>
</dbReference>
<dbReference type="Gene3D" id="3.30.200.20">
    <property type="entry name" value="Phosphorylase Kinase, domain 1"/>
    <property type="match status" value="1"/>
</dbReference>
<dbReference type="Gene3D" id="3.80.10.10">
    <property type="entry name" value="Ribonuclease Inhibitor"/>
    <property type="match status" value="4"/>
</dbReference>
<dbReference type="Gene3D" id="1.10.510.10">
    <property type="entry name" value="Transferase(Phosphotransferase) domain 1"/>
    <property type="match status" value="1"/>
</dbReference>
<dbReference type="InterPro" id="IPR011009">
    <property type="entry name" value="Kinase-like_dom_sf"/>
</dbReference>
<dbReference type="InterPro" id="IPR001611">
    <property type="entry name" value="Leu-rich_rpt"/>
</dbReference>
<dbReference type="InterPro" id="IPR003591">
    <property type="entry name" value="Leu-rich_rpt_typical-subtyp"/>
</dbReference>
<dbReference type="InterPro" id="IPR032675">
    <property type="entry name" value="LRR_dom_sf"/>
</dbReference>
<dbReference type="InterPro" id="IPR013210">
    <property type="entry name" value="LRR_N_plant-typ"/>
</dbReference>
<dbReference type="InterPro" id="IPR050647">
    <property type="entry name" value="Plant_LRR-RLKs"/>
</dbReference>
<dbReference type="InterPro" id="IPR000719">
    <property type="entry name" value="Prot_kinase_dom"/>
</dbReference>
<dbReference type="InterPro" id="IPR017441">
    <property type="entry name" value="Protein_kinase_ATP_BS"/>
</dbReference>
<dbReference type="InterPro" id="IPR008271">
    <property type="entry name" value="Ser/Thr_kinase_AS"/>
</dbReference>
<dbReference type="PANTHER" id="PTHR48056">
    <property type="entry name" value="LRR RECEPTOR-LIKE SERINE/THREONINE-PROTEIN KINASE-RELATED"/>
    <property type="match status" value="1"/>
</dbReference>
<dbReference type="PANTHER" id="PTHR48056:SF26">
    <property type="entry name" value="MDIS1-INTERACTING RECEPTOR LIKE KINASE 1"/>
    <property type="match status" value="1"/>
</dbReference>
<dbReference type="Pfam" id="PF00560">
    <property type="entry name" value="LRR_1"/>
    <property type="match status" value="11"/>
</dbReference>
<dbReference type="Pfam" id="PF13855">
    <property type="entry name" value="LRR_8"/>
    <property type="match status" value="1"/>
</dbReference>
<dbReference type="Pfam" id="PF08263">
    <property type="entry name" value="LRRNT_2"/>
    <property type="match status" value="1"/>
</dbReference>
<dbReference type="Pfam" id="PF00069">
    <property type="entry name" value="Pkinase"/>
    <property type="match status" value="1"/>
</dbReference>
<dbReference type="PRINTS" id="PR00019">
    <property type="entry name" value="LEURICHRPT"/>
</dbReference>
<dbReference type="SMART" id="SM00369">
    <property type="entry name" value="LRR_TYP"/>
    <property type="match status" value="8"/>
</dbReference>
<dbReference type="SMART" id="SM00220">
    <property type="entry name" value="S_TKc"/>
    <property type="match status" value="1"/>
</dbReference>
<dbReference type="SUPFAM" id="SSF52058">
    <property type="entry name" value="L domain-like"/>
    <property type="match status" value="1"/>
</dbReference>
<dbReference type="SUPFAM" id="SSF56112">
    <property type="entry name" value="Protein kinase-like (PK-like)"/>
    <property type="match status" value="1"/>
</dbReference>
<dbReference type="SUPFAM" id="SSF52047">
    <property type="entry name" value="RNI-like"/>
    <property type="match status" value="2"/>
</dbReference>
<dbReference type="PROSITE" id="PS00107">
    <property type="entry name" value="PROTEIN_KINASE_ATP"/>
    <property type="match status" value="1"/>
</dbReference>
<dbReference type="PROSITE" id="PS50011">
    <property type="entry name" value="PROTEIN_KINASE_DOM"/>
    <property type="match status" value="1"/>
</dbReference>
<dbReference type="PROSITE" id="PS00108">
    <property type="entry name" value="PROTEIN_KINASE_ST"/>
    <property type="match status" value="1"/>
</dbReference>
<comment type="function">
    <text evidence="8 9">Involved in the regulation of procambium maintenance and polarity during vascular-tissue development (PubMed:17570668). Involved in the pollen tube perception of the female signal (PubMed:26863186). Phosphorylates MDSI1 (PubMed:26863186).</text>
</comment>
<comment type="catalytic activity">
    <reaction evidence="12">
        <text>L-seryl-[protein] + ATP = O-phospho-L-seryl-[protein] + ADP + H(+)</text>
        <dbReference type="Rhea" id="RHEA:17989"/>
        <dbReference type="Rhea" id="RHEA-COMP:9863"/>
        <dbReference type="Rhea" id="RHEA-COMP:11604"/>
        <dbReference type="ChEBI" id="CHEBI:15378"/>
        <dbReference type="ChEBI" id="CHEBI:29999"/>
        <dbReference type="ChEBI" id="CHEBI:30616"/>
        <dbReference type="ChEBI" id="CHEBI:83421"/>
        <dbReference type="ChEBI" id="CHEBI:456216"/>
        <dbReference type="EC" id="2.7.11.1"/>
    </reaction>
</comment>
<comment type="catalytic activity">
    <reaction evidence="12">
        <text>L-threonyl-[protein] + ATP = O-phospho-L-threonyl-[protein] + ADP + H(+)</text>
        <dbReference type="Rhea" id="RHEA:46608"/>
        <dbReference type="Rhea" id="RHEA-COMP:11060"/>
        <dbReference type="Rhea" id="RHEA-COMP:11605"/>
        <dbReference type="ChEBI" id="CHEBI:15378"/>
        <dbReference type="ChEBI" id="CHEBI:30013"/>
        <dbReference type="ChEBI" id="CHEBI:30616"/>
        <dbReference type="ChEBI" id="CHEBI:61977"/>
        <dbReference type="ChEBI" id="CHEBI:456216"/>
        <dbReference type="EC" id="2.7.11.1"/>
    </reaction>
</comment>
<comment type="subunit">
    <text evidence="9">Homodimer. Interacts with MDIS1 and LURE1.2.</text>
</comment>
<comment type="interaction">
    <interactant intactId="EBI-16196224">
        <id>Q9M0G7</id>
    </interactant>
    <interactant intactId="EBI-17123993">
        <id>Q9LT96</id>
        <label>At5g49770</label>
    </interactant>
    <organismsDiffer>false</organismsDiffer>
    <experiments>2</experiments>
</comment>
<comment type="interaction">
    <interactant intactId="EBI-16196224">
        <id>Q9M0G7</id>
    </interactant>
    <interactant intactId="EBI-1799448">
        <id>Q9FL28</id>
        <label>FLS2</label>
    </interactant>
    <organismsDiffer>false</organismsDiffer>
    <experiments>3</experiments>
</comment>
<comment type="interaction">
    <interactant intactId="EBI-16196224">
        <id>Q9M0G7</id>
    </interactant>
    <interactant intactId="EBI-16196186">
        <id>Q4VP08</id>
        <label>LURE1.2</label>
    </interactant>
    <organismsDiffer>false</organismsDiffer>
    <experiments>4</experiments>
</comment>
<comment type="interaction">
    <interactant intactId="EBI-16196224">
        <id>Q9M0G7</id>
    </interactant>
    <interactant intactId="EBI-16196163">
        <id>C0LGU7</id>
        <label>MDIS1</label>
    </interactant>
    <organismsDiffer>false</organismsDiffer>
    <experiments>7</experiments>
</comment>
<comment type="subcellular location">
    <subcellularLocation>
        <location evidence="1">Cell membrane</location>
        <topology evidence="1">Single-pass type I membrane protein</topology>
    </subcellularLocation>
</comment>
<comment type="tissue specificity">
    <text evidence="9">Expressed in pollen tubes.</text>
</comment>
<comment type="PTM">
    <text evidence="9">Autophosphorylation induced by the interaction with LURE1.2.</text>
</comment>
<comment type="disruption phenotype">
    <text evidence="8">Reduced procambial cells number, and adjacent or interspersed xylem and phloem formation.</text>
</comment>
<comment type="similarity">
    <text evidence="5">Belongs to the protein kinase superfamily. Ser/Thr protein kinase family.</text>
</comment>
<accession>Q9M0G7</accession>
<keyword id="KW-0067">ATP-binding</keyword>
<keyword id="KW-1003">Cell membrane</keyword>
<keyword id="KW-0217">Developmental protein</keyword>
<keyword id="KW-0221">Differentiation</keyword>
<keyword id="KW-0325">Glycoprotein</keyword>
<keyword id="KW-0418">Kinase</keyword>
<keyword id="KW-0433">Leucine-rich repeat</keyword>
<keyword id="KW-0472">Membrane</keyword>
<keyword id="KW-0547">Nucleotide-binding</keyword>
<keyword id="KW-0597">Phosphoprotein</keyword>
<keyword id="KW-0675">Receptor</keyword>
<keyword id="KW-1185">Reference proteome</keyword>
<keyword id="KW-0677">Repeat</keyword>
<keyword id="KW-0723">Serine/threonine-protein kinase</keyword>
<keyword id="KW-0732">Signal</keyword>
<keyword id="KW-0808">Transferase</keyword>
<keyword id="KW-0812">Transmembrane</keyword>
<keyword id="KW-1133">Transmembrane helix</keyword>
<organism>
    <name type="scientific">Arabidopsis thaliana</name>
    <name type="common">Mouse-ear cress</name>
    <dbReference type="NCBI Taxonomy" id="3702"/>
    <lineage>
        <taxon>Eukaryota</taxon>
        <taxon>Viridiplantae</taxon>
        <taxon>Streptophyta</taxon>
        <taxon>Embryophyta</taxon>
        <taxon>Tracheophyta</taxon>
        <taxon>Spermatophyta</taxon>
        <taxon>Magnoliopsida</taxon>
        <taxon>eudicotyledons</taxon>
        <taxon>Gunneridae</taxon>
        <taxon>Pentapetalae</taxon>
        <taxon>rosids</taxon>
        <taxon>malvids</taxon>
        <taxon>Brassicales</taxon>
        <taxon>Brassicaceae</taxon>
        <taxon>Camelineae</taxon>
        <taxon>Arabidopsis</taxon>
    </lineage>
</organism>
<name>MIK1_ARATH</name>
<gene>
    <name evidence="11" type="primary">MIK1</name>
    <name evidence="10" type="synonym">PXL2</name>
    <name evidence="13" type="ordered locus">At4g28650</name>
    <name evidence="14" type="ORF">T5F17.100</name>
</gene>
<sequence length="1013" mass="110478">MKMKIIVLFLYYCYIGSTSSVLASIDNVNELSVLLSVKSTLVDPLNFLKDWKLSDTSDHCNWTGVRCNSNGNVEKLDLAGMNLTGKISDSISQLSSLVSFNISCNGFESLLPKSIPPLKSIDISQNSFSGSLFLFSNESLGLVHLNASGNNLSGNLTEDLGNLVSLEVLDLRGNFFQGSLPSSFKNLQKLRFLGLSGNNLTGELPSVLGQLPSLETAILGYNEFKGPIPPEFGNINSLKYLDLAIGKLSGEIPSELGKLKSLETLLLYENNFTGTIPREIGSITTLKVLDFSDNALTGEIPMEITKLKNLQLLNLMRNKLSGSIPPAISSLAQLQVLELWNNTLSGELPSDLGKNSPLQWLDVSSNSFSGEIPSTLCNKGNLTKLILFNNTFTGQIPATLSTCQSLVRVRMQNNLLNGSIPIGFGKLEKLQRLELAGNRLSGGIPGDISDSVSLSFIDFSRNQIRSSLPSTILSIHNLQAFLVADNFISGEVPDQFQDCPSLSNLDLSSNTLTGTIPSSIASCEKLVSLNLRNNNLTGEIPRQITTMSALAVLDLSNNSLTGVLPESIGTSPALELLNVSYNKLTGPVPINGFLKTINPDDLRGNSGLCGGVLPPCSKFQRATSSHSSLHGKRIVAGWLIGIASVLALGILTIVTRTLYKKWYSNGFCGDETASKGEWPWRLMAFHRLGFTASDILACIKESNMIGMGATGIVYKAEMSRSSTVLAVKKLWRSAADIEDGTTGDFVGEVNLLGKLRHRNIVRLLGFLYNDKNMMIVYEFMLNGNLGDAIHGKNAAGRLLVDWVSRYNIALGVAHGLAYLHHDCHPPVIHRDIKSNNILLDANLDARIADFGLARMMARKKETVSMVAGSYGYIAPEYGYTLKVDEKIDIYSYGVVLLELLTGRRPLEPEFGESVDIVEWVRRKIRDNISLEEALDPNVGNCRYVQEEMLLVLQIALLCTTKLPKDRPSMRDVISMLGEAKPRRKSNSNEENTSRSLAEKHSSVFSTSPVNGLL</sequence>
<evidence type="ECO:0000250" key="1"/>
<evidence type="ECO:0000250" key="2">
    <source>
        <dbReference type="UniProtKB" id="C0LGT6"/>
    </source>
</evidence>
<evidence type="ECO:0000250" key="3">
    <source>
        <dbReference type="UniProtKB" id="O22476"/>
    </source>
</evidence>
<evidence type="ECO:0000255" key="4"/>
<evidence type="ECO:0000255" key="5">
    <source>
        <dbReference type="PROSITE-ProRule" id="PRU00159"/>
    </source>
</evidence>
<evidence type="ECO:0000255" key="6">
    <source>
        <dbReference type="PROSITE-ProRule" id="PRU10027"/>
    </source>
</evidence>
<evidence type="ECO:0000256" key="7">
    <source>
        <dbReference type="SAM" id="MobiDB-lite"/>
    </source>
</evidence>
<evidence type="ECO:0000269" key="8">
    <source>
    </source>
</evidence>
<evidence type="ECO:0000269" key="9">
    <source>
    </source>
</evidence>
<evidence type="ECO:0000303" key="10">
    <source>
    </source>
</evidence>
<evidence type="ECO:0000303" key="11">
    <source>
    </source>
</evidence>
<evidence type="ECO:0000305" key="12"/>
<evidence type="ECO:0000312" key="13">
    <source>
        <dbReference type="Araport" id="AT4G28650"/>
    </source>
</evidence>
<evidence type="ECO:0000312" key="14">
    <source>
        <dbReference type="EMBL" id="CAB81453.1"/>
    </source>
</evidence>